<sequence length="643" mass="68394">MSSPSPSSSSSDHPSSPAPVPAPPGPVPEAAAASRASRAPVYLGGFVDVFSYPKDSRALYLNPADVGAHLPLPGPIPLNVEHLQEAHVGWTLGLHLTRYGLFCVAVITAEEFFTLLDRLCAASSVARTRADHHLPPNPTLEMLHTWLPELSLSSIHPDALPGAKGGDTPIFQHVALCAMGQRRGTVAVYGESLDWILSKFTSLSPEERGAIAEGYASPAPESLPEPHFTCSNEILMAKAIDAGFIKNRLEILKTDKGVAEVKAPTYLKASVQGLPANLDEVDSARGGEDPPTAAIATTPHPATDATTMNQQQPFAAQAPAGGCEDLISVPRSTFMTMLQTNLDTMRQTSLGQRFGQPIDAPAAPPAQLRVPPPAAPFPVHPGYYPAPYHPQVDAQAQYLPYVPLPPPGAMPFAPPPLPDFYKYGGIPAPGYSPVAHPARPGKRKRDCDEEFEGPLFPGEIHKDVQSLSKSIAALQSELKDIKNSQQFPQPLPQPQLQPQAQPQPQPAPQLYPAPPQAFYHPAAGDQGYYVRYLNPFQASGGVPCAPGPQGVGEPQAPQVTVTHNGHQAAPQAGGGATGATAANVEQRQPEGGEACGAQQQQPPQPQPQQQQQPQQQAFVEASTKPSQISQLQKIFCEELLNKT</sequence>
<keyword id="KW-0877">Alternative promoter usage</keyword>
<keyword id="KW-1035">Host cytoplasm</keyword>
<keyword id="KW-1048">Host nucleus</keyword>
<keyword id="KW-0378">Hydrolase</keyword>
<keyword id="KW-0597">Phosphoprotein</keyword>
<keyword id="KW-0645">Protease</keyword>
<keyword id="KW-1185">Reference proteome</keyword>
<keyword id="KW-0720">Serine protease</keyword>
<keyword id="KW-0118">Viral capsid assembly</keyword>
<keyword id="KW-1188">Viral release from host cell</keyword>
<reference key="1">
    <citation type="journal article" date="1995" name="J. Mol. Biol.">
        <title>The DNA sequence of equine herpesvirus 2.</title>
        <authorList>
            <person name="Telford E.A.R."/>
            <person name="Watson M.S."/>
            <person name="Aird H.C."/>
            <person name="Perry J."/>
            <person name="Davison A.J."/>
        </authorList>
    </citation>
    <scope>NUCLEOTIDE SEQUENCE [LARGE SCALE GENOMIC DNA]</scope>
</reference>
<name>SCAF_EHV2</name>
<protein>
    <recommendedName>
        <fullName evidence="3">Capsid scaffolding protein</fullName>
    </recommendedName>
    <alternativeName>
        <fullName>Capsid protein P40</fullName>
    </alternativeName>
    <alternativeName>
        <fullName evidence="3">Protease precursor</fullName>
        <shortName evidence="3">pPR</shortName>
    </alternativeName>
    <component>
        <recommendedName>
            <fullName evidence="3">Assemblin</fullName>
            <ecNumber evidence="3">3.4.21.97</ecNumber>
        </recommendedName>
        <alternativeName>
            <fullName evidence="3">Protease</fullName>
            <shortName evidence="3">Pr</shortName>
        </alternativeName>
    </component>
    <component>
        <recommendedName>
            <fullName evidence="3">Assembly protein</fullName>
            <shortName evidence="3">AP</shortName>
        </recommendedName>
        <alternativeName>
            <fullName evidence="3">Capsid assembly protein</fullName>
        </alternativeName>
    </component>
</protein>
<gene>
    <name type="ORF">17</name>
</gene>
<organism>
    <name type="scientific">Equine herpesvirus 2 (strain 86/87)</name>
    <name type="common">EHV-2</name>
    <dbReference type="NCBI Taxonomy" id="82831"/>
    <lineage>
        <taxon>Viruses</taxon>
        <taxon>Duplodnaviria</taxon>
        <taxon>Heunggongvirae</taxon>
        <taxon>Peploviricota</taxon>
        <taxon>Herviviricetes</taxon>
        <taxon>Herpesvirales</taxon>
        <taxon>Orthoherpesviridae</taxon>
        <taxon>Gammaherpesvirinae</taxon>
        <taxon>Percavirus</taxon>
        <taxon>Percavirus equidgamma2</taxon>
        <taxon>Equid gammaherpesvirus 2</taxon>
    </lineage>
</organism>
<organismHost>
    <name type="scientific">Equus caballus</name>
    <name type="common">Horse</name>
    <dbReference type="NCBI Taxonomy" id="9796"/>
</organismHost>
<feature type="chain" id="PRO_0000376800" description="Capsid scaffolding protein">
    <location>
        <begin position="1"/>
        <end position="643"/>
    </location>
</feature>
<feature type="chain" id="PRO_0000027263" description="Assemblin" evidence="3">
    <location>
        <begin position="1"/>
        <end position="269"/>
    </location>
</feature>
<feature type="chain" id="PRO_0000027264" description="Assembly protein" evidence="3">
    <location>
        <begin position="270"/>
        <end position="643"/>
    </location>
</feature>
<feature type="region of interest" description="Disordered" evidence="4">
    <location>
        <begin position="1"/>
        <end position="31"/>
    </location>
</feature>
<feature type="region of interest" description="Disordered" evidence="4">
    <location>
        <begin position="283"/>
        <end position="306"/>
    </location>
</feature>
<feature type="region of interest" description="Interaction with pAP" evidence="3">
    <location>
        <begin position="324"/>
        <end position="343"/>
    </location>
</feature>
<feature type="region of interest" description="Disordered" evidence="4">
    <location>
        <begin position="485"/>
        <end position="519"/>
    </location>
</feature>
<feature type="region of interest" description="Disordered" evidence="4">
    <location>
        <begin position="544"/>
        <end position="625"/>
    </location>
</feature>
<feature type="region of interest" description="Interaction with major capsid protein" evidence="3">
    <location>
        <begin position="623"/>
        <end position="643"/>
    </location>
</feature>
<feature type="short sequence motif" description="Nuclear localization signal" evidence="1">
    <location>
        <begin position="439"/>
        <end position="445"/>
    </location>
</feature>
<feature type="compositionally biased region" description="Low complexity" evidence="4">
    <location>
        <begin position="1"/>
        <end position="15"/>
    </location>
</feature>
<feature type="compositionally biased region" description="Pro residues" evidence="4">
    <location>
        <begin position="16"/>
        <end position="27"/>
    </location>
</feature>
<feature type="compositionally biased region" description="Low complexity" evidence="4">
    <location>
        <begin position="290"/>
        <end position="306"/>
    </location>
</feature>
<feature type="compositionally biased region" description="Pro residues" evidence="4">
    <location>
        <begin position="489"/>
        <end position="515"/>
    </location>
</feature>
<feature type="compositionally biased region" description="Low complexity" evidence="4">
    <location>
        <begin position="607"/>
        <end position="616"/>
    </location>
</feature>
<feature type="active site" description="Charge relay system" evidence="3">
    <location>
        <position position="82"/>
    </location>
</feature>
<feature type="active site" description="Charge relay system" evidence="3">
    <location>
        <position position="151"/>
    </location>
</feature>
<feature type="active site" description="Charge relay system" evidence="3">
    <location>
        <position position="173"/>
    </location>
</feature>
<feature type="site" description="Cleavage; by assemblin; Release site" evidence="3">
    <location>
        <begin position="269"/>
        <end position="270"/>
    </location>
</feature>
<feature type="site" description="Cleavage; by assemblin; Maturation site" evidence="2">
    <location>
        <begin position="621"/>
        <end position="622"/>
    </location>
</feature>
<feature type="splice variant" id="VSP_037417" description="In isoform pAP." evidence="5">
    <location>
        <begin position="1"/>
        <end position="307"/>
    </location>
</feature>
<accession>P52369</accession>
<proteinExistence type="inferred from homology"/>
<evidence type="ECO:0000250" key="1"/>
<evidence type="ECO:0000250" key="2">
    <source>
        <dbReference type="UniProtKB" id="P16753"/>
    </source>
</evidence>
<evidence type="ECO:0000255" key="3">
    <source>
        <dbReference type="HAMAP-Rule" id="MF_04008"/>
    </source>
</evidence>
<evidence type="ECO:0000256" key="4">
    <source>
        <dbReference type="SAM" id="MobiDB-lite"/>
    </source>
</evidence>
<evidence type="ECO:0000305" key="5"/>
<dbReference type="EC" id="3.4.21.97" evidence="3"/>
<dbReference type="EMBL" id="U20824">
    <property type="protein sequence ID" value="AAC13804.1"/>
    <property type="molecule type" value="Genomic_DNA"/>
</dbReference>
<dbReference type="PIR" id="S55610">
    <property type="entry name" value="S55610"/>
</dbReference>
<dbReference type="SMR" id="P52369"/>
<dbReference type="MEROPS" id="S21.006"/>
<dbReference type="KEGG" id="vg:1461012"/>
<dbReference type="Proteomes" id="UP000007083">
    <property type="component" value="Segment"/>
</dbReference>
<dbReference type="GO" id="GO:0030430">
    <property type="term" value="C:host cell cytoplasm"/>
    <property type="evidence" value="ECO:0007669"/>
    <property type="project" value="UniProtKB-SubCell"/>
</dbReference>
<dbReference type="GO" id="GO:0042025">
    <property type="term" value="C:host cell nucleus"/>
    <property type="evidence" value="ECO:0007669"/>
    <property type="project" value="UniProtKB-SubCell"/>
</dbReference>
<dbReference type="GO" id="GO:0042802">
    <property type="term" value="F:identical protein binding"/>
    <property type="evidence" value="ECO:0007669"/>
    <property type="project" value="UniProtKB-UniRule"/>
</dbReference>
<dbReference type="GO" id="GO:0004252">
    <property type="term" value="F:serine-type endopeptidase activity"/>
    <property type="evidence" value="ECO:0007669"/>
    <property type="project" value="UniProtKB-UniRule"/>
</dbReference>
<dbReference type="GO" id="GO:0039708">
    <property type="term" value="P:nuclear capsid assembly"/>
    <property type="evidence" value="ECO:0007669"/>
    <property type="project" value="UniProtKB-ARBA"/>
</dbReference>
<dbReference type="GO" id="GO:0006508">
    <property type="term" value="P:proteolysis"/>
    <property type="evidence" value="ECO:0007669"/>
    <property type="project" value="UniProtKB-KW"/>
</dbReference>
<dbReference type="GO" id="GO:0019076">
    <property type="term" value="P:viral release from host cell"/>
    <property type="evidence" value="ECO:0007669"/>
    <property type="project" value="UniProtKB-UniRule"/>
</dbReference>
<dbReference type="Gene3D" id="3.20.16.10">
    <property type="entry name" value="Herpesvirus/Caudovirus protease domain"/>
    <property type="match status" value="1"/>
</dbReference>
<dbReference type="HAMAP" id="MF_04008">
    <property type="entry name" value="HSV_SCAF"/>
    <property type="match status" value="1"/>
</dbReference>
<dbReference type="InterPro" id="IPR035443">
    <property type="entry name" value="Herpes_virus_sf"/>
</dbReference>
<dbReference type="InterPro" id="IPR001847">
    <property type="entry name" value="Peptidase_S21"/>
</dbReference>
<dbReference type="Pfam" id="PF00716">
    <property type="entry name" value="Peptidase_S21"/>
    <property type="match status" value="1"/>
</dbReference>
<dbReference type="PRINTS" id="PR00236">
    <property type="entry name" value="HSVCAPSIDP40"/>
</dbReference>
<dbReference type="SUPFAM" id="SSF50789">
    <property type="entry name" value="Herpes virus serine proteinase, assemblin"/>
    <property type="match status" value="1"/>
</dbReference>
<comment type="function">
    <molecule>Capsid scaffolding protein</molecule>
    <text evidence="3">Acts as a scaffold protein by binding major capsid protein in the cytoplasm, inducing the nuclear localization of both proteins. Multimerizes in the nucleus such as major capsid protein forms the icosahedral T=16 capsid. Autocatalytic cleavage releases the assembly protein, and subsequently abolishes interaction with major capsid protein. Cleavages products are evicted from the capsid before or during DNA packaging.</text>
</comment>
<comment type="function">
    <molecule>Assemblin</molecule>
    <text evidence="3">Protease that plays an essential role in virion assembly within the nucleus. Catalyzes the cleavage of the assembly protein after formation of the spherical procapsid. By that cleavage, the capsid matures and gains its icosahedral shape. The cleavage sites seem to include -Ala-Ser-, -Ala-Ala-, as well as Ala-Thr bonds. Assemblin and cleavages products are evicted from the capsid before or during DNA packaging.</text>
</comment>
<comment type="function">
    <molecule>Assembly protein</molecule>
    <text evidence="3">Plays a major role in capsid assembly. Acts as a scaffold protein by binding major capsid protein. Multimerizes in the nucleus such as major capsid protein forms the icosahedral T=16 capsid. Cleaved by assemblin after capsid completion. The cleavages products are evicted from the capsid before or during DNA packaging.</text>
</comment>
<comment type="catalytic activity">
    <molecule>Assemblin</molecule>
    <reaction evidence="3">
        <text>Cleaves -Ala-|-Ser- and -Ala-|-Ala- bonds in the scaffold protein.</text>
        <dbReference type="EC" id="3.4.21.97"/>
    </reaction>
</comment>
<comment type="subunit">
    <molecule>Capsid scaffolding protein</molecule>
    <text evidence="3">Homomultimer. Interacts with major capsid protein.</text>
</comment>
<comment type="subunit">
    <molecule>Assemblin</molecule>
    <text evidence="3">Exists in a monomer-dimer equilibrium with the dimer being the active species.</text>
</comment>
<comment type="subunit">
    <molecule>Assembly protein</molecule>
    <text evidence="3">Homomultimer. Interacts with major capsid protein.</text>
</comment>
<comment type="subcellular location">
    <molecule>Capsid scaffolding protein</molecule>
    <subcellularLocation>
        <location evidence="3">Host cytoplasm</location>
    </subcellularLocation>
</comment>
<comment type="subcellular location">
    <molecule>Assemblin</molecule>
    <subcellularLocation>
        <location evidence="3">Host nucleus</location>
    </subcellularLocation>
</comment>
<comment type="subcellular location">
    <molecule>Assembly protein</molecule>
    <subcellularLocation>
        <location evidence="3">Host nucleus</location>
    </subcellularLocation>
</comment>
<comment type="alternative products">
    <event type="alternative promoter"/>
    <isoform>
        <id>P52369-1</id>
        <name>Capsid scaffolding protein</name>
        <name>pPR</name>
        <sequence type="displayed"/>
    </isoform>
    <isoform>
        <id>P52369-2</id>
        <name>pAP</name>
        <name>Assembly protein</name>
        <sequence type="described" ref="VSP_037417"/>
    </isoform>
</comment>
<comment type="domain">
    <text evidence="3">Region of interaction between pPR and pAP is called Amino conserved domain (ACD). The region of interaction with major capsid protein is called carboxyl conserved domain (CCD).</text>
</comment>
<comment type="PTM">
    <molecule>Capsid scaffolding protein</molecule>
    <text evidence="3">Capsid scaffolding protein is cleaved by assemblin after formation of the spherical procapsid. As a result, the capsid obtains its mature, icosahedral shape. Cleavages occur at two or more sites: release (R-site) and maturation (M-site).</text>
</comment>
<comment type="similarity">
    <text evidence="3">Belongs to the herpesviridae capsid scaffolding protein family.</text>
</comment>